<feature type="chain" id="PRO_1000068728" description="Pyrimidine/purine nucleoside phosphorylase">
    <location>
        <begin position="1"/>
        <end position="94"/>
    </location>
</feature>
<comment type="function">
    <text evidence="1">Catalyzes the phosphorolysis of diverse nucleosides, yielding D-ribose 1-phosphate and the respective free bases. Can use uridine, adenosine, guanosine, cytidine, thymidine, inosine and xanthosine as substrates. Also catalyzes the reverse reactions.</text>
</comment>
<comment type="catalytic activity">
    <reaction evidence="1">
        <text>a purine D-ribonucleoside + phosphate = a purine nucleobase + alpha-D-ribose 1-phosphate</text>
        <dbReference type="Rhea" id="RHEA:19805"/>
        <dbReference type="ChEBI" id="CHEBI:26386"/>
        <dbReference type="ChEBI" id="CHEBI:43474"/>
        <dbReference type="ChEBI" id="CHEBI:57720"/>
        <dbReference type="ChEBI" id="CHEBI:142355"/>
        <dbReference type="EC" id="2.4.2.1"/>
    </reaction>
</comment>
<comment type="catalytic activity">
    <reaction evidence="1">
        <text>adenosine + phosphate = alpha-D-ribose 1-phosphate + adenine</text>
        <dbReference type="Rhea" id="RHEA:27642"/>
        <dbReference type="ChEBI" id="CHEBI:16335"/>
        <dbReference type="ChEBI" id="CHEBI:16708"/>
        <dbReference type="ChEBI" id="CHEBI:43474"/>
        <dbReference type="ChEBI" id="CHEBI:57720"/>
        <dbReference type="EC" id="2.4.2.1"/>
    </reaction>
</comment>
<comment type="catalytic activity">
    <reaction evidence="1">
        <text>cytidine + phosphate = cytosine + alpha-D-ribose 1-phosphate</text>
        <dbReference type="Rhea" id="RHEA:52540"/>
        <dbReference type="ChEBI" id="CHEBI:16040"/>
        <dbReference type="ChEBI" id="CHEBI:17562"/>
        <dbReference type="ChEBI" id="CHEBI:43474"/>
        <dbReference type="ChEBI" id="CHEBI:57720"/>
        <dbReference type="EC" id="2.4.2.2"/>
    </reaction>
</comment>
<comment type="catalytic activity">
    <reaction evidence="1">
        <text>guanosine + phosphate = alpha-D-ribose 1-phosphate + guanine</text>
        <dbReference type="Rhea" id="RHEA:13233"/>
        <dbReference type="ChEBI" id="CHEBI:16235"/>
        <dbReference type="ChEBI" id="CHEBI:16750"/>
        <dbReference type="ChEBI" id="CHEBI:43474"/>
        <dbReference type="ChEBI" id="CHEBI:57720"/>
        <dbReference type="EC" id="2.4.2.1"/>
    </reaction>
</comment>
<comment type="catalytic activity">
    <reaction evidence="1">
        <text>inosine + phosphate = alpha-D-ribose 1-phosphate + hypoxanthine</text>
        <dbReference type="Rhea" id="RHEA:27646"/>
        <dbReference type="ChEBI" id="CHEBI:17368"/>
        <dbReference type="ChEBI" id="CHEBI:17596"/>
        <dbReference type="ChEBI" id="CHEBI:43474"/>
        <dbReference type="ChEBI" id="CHEBI:57720"/>
        <dbReference type="EC" id="2.4.2.1"/>
    </reaction>
</comment>
<comment type="catalytic activity">
    <reaction evidence="1">
        <text>thymidine + phosphate = 2-deoxy-alpha-D-ribose 1-phosphate + thymine</text>
        <dbReference type="Rhea" id="RHEA:16037"/>
        <dbReference type="ChEBI" id="CHEBI:17748"/>
        <dbReference type="ChEBI" id="CHEBI:17821"/>
        <dbReference type="ChEBI" id="CHEBI:43474"/>
        <dbReference type="ChEBI" id="CHEBI:57259"/>
        <dbReference type="EC" id="2.4.2.2"/>
    </reaction>
</comment>
<comment type="catalytic activity">
    <reaction evidence="1">
        <text>uridine + phosphate = alpha-D-ribose 1-phosphate + uracil</text>
        <dbReference type="Rhea" id="RHEA:24388"/>
        <dbReference type="ChEBI" id="CHEBI:16704"/>
        <dbReference type="ChEBI" id="CHEBI:17568"/>
        <dbReference type="ChEBI" id="CHEBI:43474"/>
        <dbReference type="ChEBI" id="CHEBI:57720"/>
        <dbReference type="EC" id="2.4.2.2"/>
    </reaction>
</comment>
<comment type="catalytic activity">
    <reaction evidence="1">
        <text>xanthosine + phosphate = alpha-D-ribose 1-phosphate + xanthine</text>
        <dbReference type="Rhea" id="RHEA:27638"/>
        <dbReference type="ChEBI" id="CHEBI:17712"/>
        <dbReference type="ChEBI" id="CHEBI:18107"/>
        <dbReference type="ChEBI" id="CHEBI:43474"/>
        <dbReference type="ChEBI" id="CHEBI:57720"/>
        <dbReference type="EC" id="2.4.2.1"/>
    </reaction>
</comment>
<comment type="similarity">
    <text evidence="1">Belongs to the nucleoside phosphorylase PpnP family.</text>
</comment>
<proteinExistence type="inferred from homology"/>
<organism>
    <name type="scientific">Escherichia coli O139:H28 (strain E24377A / ETEC)</name>
    <dbReference type="NCBI Taxonomy" id="331111"/>
    <lineage>
        <taxon>Bacteria</taxon>
        <taxon>Pseudomonadati</taxon>
        <taxon>Pseudomonadota</taxon>
        <taxon>Gammaproteobacteria</taxon>
        <taxon>Enterobacterales</taxon>
        <taxon>Enterobacteriaceae</taxon>
        <taxon>Escherichia</taxon>
    </lineage>
</organism>
<accession>A7ZIE0</accession>
<reference key="1">
    <citation type="journal article" date="2008" name="J. Bacteriol.">
        <title>The pangenome structure of Escherichia coli: comparative genomic analysis of E. coli commensal and pathogenic isolates.</title>
        <authorList>
            <person name="Rasko D.A."/>
            <person name="Rosovitz M.J."/>
            <person name="Myers G.S.A."/>
            <person name="Mongodin E.F."/>
            <person name="Fricke W.F."/>
            <person name="Gajer P."/>
            <person name="Crabtree J."/>
            <person name="Sebaihia M."/>
            <person name="Thomson N.R."/>
            <person name="Chaudhuri R."/>
            <person name="Henderson I.R."/>
            <person name="Sperandio V."/>
            <person name="Ravel J."/>
        </authorList>
    </citation>
    <scope>NUCLEOTIDE SEQUENCE [LARGE SCALE GENOMIC DNA]</scope>
    <source>
        <strain>E24377A / ETEC</strain>
    </source>
</reference>
<dbReference type="EC" id="2.4.2.1" evidence="1"/>
<dbReference type="EC" id="2.4.2.2" evidence="1"/>
<dbReference type="EMBL" id="CP000800">
    <property type="protein sequence ID" value="ABV17539.1"/>
    <property type="molecule type" value="Genomic_DNA"/>
</dbReference>
<dbReference type="RefSeq" id="WP_000941942.1">
    <property type="nucleotide sequence ID" value="NC_009801.1"/>
</dbReference>
<dbReference type="SMR" id="A7ZIE0"/>
<dbReference type="GeneID" id="93777070"/>
<dbReference type="KEGG" id="ecw:EcE24377A_0418"/>
<dbReference type="HOGENOM" id="CLU_157874_0_0_6"/>
<dbReference type="Proteomes" id="UP000001122">
    <property type="component" value="Chromosome"/>
</dbReference>
<dbReference type="GO" id="GO:0005829">
    <property type="term" value="C:cytosol"/>
    <property type="evidence" value="ECO:0007669"/>
    <property type="project" value="TreeGrafter"/>
</dbReference>
<dbReference type="GO" id="GO:0047975">
    <property type="term" value="F:guanosine phosphorylase activity"/>
    <property type="evidence" value="ECO:0007669"/>
    <property type="project" value="UniProtKB-EC"/>
</dbReference>
<dbReference type="GO" id="GO:0004731">
    <property type="term" value="F:purine-nucleoside phosphorylase activity"/>
    <property type="evidence" value="ECO:0007669"/>
    <property type="project" value="UniProtKB-UniRule"/>
</dbReference>
<dbReference type="GO" id="GO:0009032">
    <property type="term" value="F:thymidine phosphorylase activity"/>
    <property type="evidence" value="ECO:0007669"/>
    <property type="project" value="UniProtKB-EC"/>
</dbReference>
<dbReference type="GO" id="GO:0004850">
    <property type="term" value="F:uridine phosphorylase activity"/>
    <property type="evidence" value="ECO:0007669"/>
    <property type="project" value="UniProtKB-EC"/>
</dbReference>
<dbReference type="CDD" id="cd20296">
    <property type="entry name" value="cupin_PpnP-like"/>
    <property type="match status" value="1"/>
</dbReference>
<dbReference type="FunFam" id="2.60.120.10:FF:000016">
    <property type="entry name" value="Pyrimidine/purine nucleoside phosphorylase"/>
    <property type="match status" value="1"/>
</dbReference>
<dbReference type="Gene3D" id="2.60.120.10">
    <property type="entry name" value="Jelly Rolls"/>
    <property type="match status" value="1"/>
</dbReference>
<dbReference type="HAMAP" id="MF_01537">
    <property type="entry name" value="Nucleos_phosphorylase_PpnP"/>
    <property type="match status" value="1"/>
</dbReference>
<dbReference type="InterPro" id="IPR009664">
    <property type="entry name" value="Ppnp"/>
</dbReference>
<dbReference type="InterPro" id="IPR014710">
    <property type="entry name" value="RmlC-like_jellyroll"/>
</dbReference>
<dbReference type="InterPro" id="IPR011051">
    <property type="entry name" value="RmlC_Cupin_sf"/>
</dbReference>
<dbReference type="NCBIfam" id="NF007875">
    <property type="entry name" value="PRK10579.1"/>
    <property type="match status" value="1"/>
</dbReference>
<dbReference type="PANTHER" id="PTHR36540">
    <property type="entry name" value="PYRIMIDINE/PURINE NUCLEOSIDE PHOSPHORYLASE"/>
    <property type="match status" value="1"/>
</dbReference>
<dbReference type="PANTHER" id="PTHR36540:SF1">
    <property type="entry name" value="PYRIMIDINE_PURINE NUCLEOSIDE PHOSPHORYLASE"/>
    <property type="match status" value="1"/>
</dbReference>
<dbReference type="Pfam" id="PF06865">
    <property type="entry name" value="Ppnp"/>
    <property type="match status" value="1"/>
</dbReference>
<dbReference type="SUPFAM" id="SSF51182">
    <property type="entry name" value="RmlC-like cupins"/>
    <property type="match status" value="1"/>
</dbReference>
<protein>
    <recommendedName>
        <fullName evidence="1">Pyrimidine/purine nucleoside phosphorylase</fullName>
        <ecNumber evidence="1">2.4.2.1</ecNumber>
        <ecNumber evidence="1">2.4.2.2</ecNumber>
    </recommendedName>
    <alternativeName>
        <fullName evidence="1">Adenosine phosphorylase</fullName>
    </alternativeName>
    <alternativeName>
        <fullName evidence="1">Cytidine phosphorylase</fullName>
    </alternativeName>
    <alternativeName>
        <fullName evidence="1">Guanosine phosphorylase</fullName>
    </alternativeName>
    <alternativeName>
        <fullName evidence="1">Inosine phosphorylase</fullName>
    </alternativeName>
    <alternativeName>
        <fullName evidence="1">Thymidine phosphorylase</fullName>
    </alternativeName>
    <alternativeName>
        <fullName evidence="1">Uridine phosphorylase</fullName>
    </alternativeName>
    <alternativeName>
        <fullName evidence="1">Xanthosine phosphorylase</fullName>
    </alternativeName>
</protein>
<sequence length="94" mass="10234">MLQSNEYFSGKVKSIGFSSSSTGRASVGVMVEGEYTFSTAEPEEMTVISGALNVLLPDATDWQVYEAGSVFNVPGHSEFHLQVAEPTSYLCRYL</sequence>
<name>PPNP_ECO24</name>
<gene>
    <name evidence="1" type="primary">ppnP</name>
    <name type="ordered locus">EcE24377A_0418</name>
</gene>
<evidence type="ECO:0000255" key="1">
    <source>
        <dbReference type="HAMAP-Rule" id="MF_01537"/>
    </source>
</evidence>
<keyword id="KW-0328">Glycosyltransferase</keyword>
<keyword id="KW-1185">Reference proteome</keyword>
<keyword id="KW-0808">Transferase</keyword>